<keyword id="KW-0025">Alternative splicing</keyword>
<keyword id="KW-0027">Amidation</keyword>
<keyword id="KW-0067">ATP-binding</keyword>
<keyword id="KW-0165">Cleavage on pair of basic residues</keyword>
<keyword id="KW-0325">Glycoprotein</keyword>
<keyword id="KW-0372">Hormone</keyword>
<keyword id="KW-0547">Nucleotide-binding</keyword>
<keyword id="KW-1185">Reference proteome</keyword>
<keyword id="KW-0964">Secreted</keyword>
<keyword id="KW-0732">Signal</keyword>
<gene>
    <name type="primary">TOR2A</name>
    <name type="ORF">HEMBA1005096</name>
    <name type="ORF">PSEC0218</name>
</gene>
<protein>
    <recommendedName>
        <fullName>Prosalusin</fullName>
    </recommendedName>
    <alternativeName>
        <fullName>Torsin family 2 member A</fullName>
    </alternativeName>
    <alternativeName>
        <fullName>Torsin-2A</fullName>
    </alternativeName>
    <component>
        <recommendedName>
            <fullName>Salusin-alpha</fullName>
        </recommendedName>
    </component>
    <component>
        <recommendedName>
            <fullName>Salusin-beta</fullName>
        </recommendedName>
    </component>
</protein>
<evidence type="ECO:0000255" key="1"/>
<evidence type="ECO:0000256" key="2">
    <source>
        <dbReference type="SAM" id="MobiDB-lite"/>
    </source>
</evidence>
<evidence type="ECO:0000269" key="3">
    <source>
    </source>
</evidence>
<evidence type="ECO:0000305" key="4"/>
<feature type="signal peptide" evidence="1">
    <location>
        <begin position="1"/>
        <end position="26"/>
    </location>
</feature>
<feature type="chain" id="PRO_0000228825" description="Prosalusin">
    <location>
        <begin position="27"/>
        <end position="242"/>
    </location>
</feature>
<feature type="propeptide" id="PRO_0000228826" evidence="1">
    <location>
        <begin position="27"/>
        <end position="189"/>
    </location>
</feature>
<feature type="peptide" id="PRO_0000228827" description="Salusin-beta">
    <location>
        <begin position="192"/>
        <end position="211"/>
    </location>
</feature>
<feature type="peptide" id="PRO_0000228828" description="Salusin-alpha">
    <location>
        <begin position="214"/>
        <end position="241"/>
    </location>
</feature>
<feature type="region of interest" description="Disordered" evidence="2">
    <location>
        <begin position="210"/>
        <end position="242"/>
    </location>
</feature>
<feature type="compositionally biased region" description="Low complexity" evidence="2">
    <location>
        <begin position="225"/>
        <end position="235"/>
    </location>
</feature>
<feature type="binding site" evidence="1">
    <location>
        <begin position="93"/>
        <end position="100"/>
    </location>
    <ligand>
        <name>ATP</name>
        <dbReference type="ChEBI" id="CHEBI:30616"/>
    </ligand>
</feature>
<feature type="modified residue" description="Lysine amide" evidence="3">
    <location>
        <position position="241"/>
    </location>
</feature>
<feature type="glycosylation site" description="N-linked (GlcNAc...) asparagine" evidence="1">
    <location>
        <position position="149"/>
    </location>
</feature>
<comment type="function">
    <text evidence="3">Salusins -alpha and -beta may be endocrine and/or paracrine factors able to increase intracellular calcium concentrations and induce cell mitogenesis. Salusins may also be potent hypotensive peptides.</text>
</comment>
<comment type="subcellular location">
    <subcellularLocation>
        <location evidence="3">Secreted</location>
    </subcellularLocation>
</comment>
<comment type="alternative products">
    <event type="alternative splicing"/>
    <isoform>
        <id>Q8N2E6-1</id>
        <name>4</name>
        <sequence type="displayed"/>
    </isoform>
    <isoform>
        <id>Q5JU69-1</id>
        <name>1</name>
        <sequence type="external"/>
    </isoform>
    <isoform>
        <id>Q5JU69-2</id>
        <name>2</name>
        <sequence type="external"/>
    </isoform>
    <isoform>
        <id>Q5JU69-5</id>
        <name>3</name>
        <sequence type="external"/>
    </isoform>
</comment>
<comment type="tissue specificity">
    <text evidence="3">Isoform 4 is ubiquitously expressed, with high level in vascular endothelial cells and vascular smooth muscle cells.</text>
</comment>
<comment type="PTM">
    <text evidence="3">Amidation of salusin-alpha(29-Gly) by peptidylglycine alpha-amidating monooxygenase, PAM, converts Lys-241-Gly-242 to Lys-241-NH2 and gives raise to salusin-alpha.</text>
</comment>
<comment type="miscellaneous">
    <molecule>Isoform 4</molecule>
    <text>Salusins -alpha and -beta peptides are derived from isoform 4.</text>
</comment>
<comment type="similarity">
    <text evidence="4">Belongs to the ClpA/ClpB family. Torsin subfamily.</text>
</comment>
<dbReference type="EMBL" id="AK075520">
    <property type="protein sequence ID" value="BAC11667.1"/>
    <property type="molecule type" value="mRNA"/>
</dbReference>
<dbReference type="EMBL" id="AL162426">
    <property type="status" value="NOT_ANNOTATED_CDS"/>
    <property type="molecule type" value="Genomic_DNA"/>
</dbReference>
<dbReference type="CCDS" id="CCDS48024.1">
    <molecule id="Q8N2E6-1"/>
</dbReference>
<dbReference type="RefSeq" id="NP_001127902.1">
    <molecule id="Q8N2E6-1"/>
    <property type="nucleotide sequence ID" value="NM_001134430.3"/>
</dbReference>
<dbReference type="SMR" id="Q8N2E6"/>
<dbReference type="BioGRID" id="118167">
    <property type="interactions" value="35"/>
</dbReference>
<dbReference type="GlyConnect" id="1644">
    <property type="glycosylation" value="2 N-Linked glycans (1 site)"/>
</dbReference>
<dbReference type="GlyCosmos" id="Q8N2E6">
    <property type="glycosylation" value="1 site, 2 glycans"/>
</dbReference>
<dbReference type="PhosphoSitePlus" id="Q8N2E6"/>
<dbReference type="BioMuta" id="TOR2A"/>
<dbReference type="DMDM" id="74750929"/>
<dbReference type="jPOST" id="Q8N2E6"/>
<dbReference type="MassIVE" id="Q8N2E6"/>
<dbReference type="PeptideAtlas" id="Q8N2E6"/>
<dbReference type="ProteomicsDB" id="71686">
    <molecule id="Q8N2E6-1"/>
</dbReference>
<dbReference type="Antibodypedia" id="30786">
    <property type="antibodies" value="135 antibodies from 22 providers"/>
</dbReference>
<dbReference type="DNASU" id="27433"/>
<dbReference type="Ensembl" id="ENST00000336067.10">
    <molecule id="Q8N2E6-1"/>
    <property type="protein sequence ID" value="ENSP00000338317.6"/>
    <property type="gene ID" value="ENSG00000160404.18"/>
</dbReference>
<dbReference type="GeneID" id="27433"/>
<dbReference type="UCSC" id="uc004brt.5">
    <molecule id="Q8N2E6-1"/>
    <property type="organism name" value="human"/>
</dbReference>
<dbReference type="AGR" id="HGNC:11996"/>
<dbReference type="CTD" id="27433"/>
<dbReference type="DisGeNET" id="27433"/>
<dbReference type="GeneCards" id="TOR2A"/>
<dbReference type="HGNC" id="HGNC:11996">
    <property type="gene designation" value="TOR2A"/>
</dbReference>
<dbReference type="HPA" id="ENSG00000160404">
    <property type="expression patterns" value="Low tissue specificity"/>
</dbReference>
<dbReference type="MIM" id="608052">
    <property type="type" value="gene"/>
</dbReference>
<dbReference type="neXtProt" id="NX_Q8N2E6"/>
<dbReference type="OpenTargets" id="ENSG00000160404"/>
<dbReference type="PharmGKB" id="PA36677"/>
<dbReference type="VEuPathDB" id="HostDB:ENSG00000160404"/>
<dbReference type="GeneTree" id="ENSGT00950000182888"/>
<dbReference type="HOGENOM" id="CLU_1199501_0_0_1"/>
<dbReference type="OrthoDB" id="19623at2759"/>
<dbReference type="PathwayCommons" id="Q8N2E6"/>
<dbReference type="SignaLink" id="Q8N2E6"/>
<dbReference type="BioGRID-ORCS" id="27433">
    <property type="hits" value="168 hits in 1166 CRISPR screens"/>
</dbReference>
<dbReference type="ChiTaRS" id="TOR2A">
    <property type="organism name" value="human"/>
</dbReference>
<dbReference type="GenomeRNAi" id="27433"/>
<dbReference type="Pharos" id="Q8N2E6">
    <property type="development level" value="Tbio"/>
</dbReference>
<dbReference type="Proteomes" id="UP000005640">
    <property type="component" value="Chromosome 9"/>
</dbReference>
<dbReference type="Bgee" id="ENSG00000160404">
    <property type="expression patterns" value="Expressed in oocyte and 110 other cell types or tissues"/>
</dbReference>
<dbReference type="ExpressionAtlas" id="Q8N2E6">
    <property type="expression patterns" value="baseline and differential"/>
</dbReference>
<dbReference type="GO" id="GO:0005737">
    <property type="term" value="C:cytoplasm"/>
    <property type="evidence" value="ECO:0007669"/>
    <property type="project" value="UniProtKB-ARBA"/>
</dbReference>
<dbReference type="GO" id="GO:0012505">
    <property type="term" value="C:endomembrane system"/>
    <property type="evidence" value="ECO:0007669"/>
    <property type="project" value="UniProtKB-ARBA"/>
</dbReference>
<dbReference type="GO" id="GO:0005576">
    <property type="term" value="C:extracellular region"/>
    <property type="evidence" value="ECO:0007669"/>
    <property type="project" value="UniProtKB-SubCell"/>
</dbReference>
<dbReference type="GO" id="GO:0043231">
    <property type="term" value="C:intracellular membrane-bounded organelle"/>
    <property type="evidence" value="ECO:0007669"/>
    <property type="project" value="UniProtKB-ARBA"/>
</dbReference>
<dbReference type="GO" id="GO:0005524">
    <property type="term" value="F:ATP binding"/>
    <property type="evidence" value="ECO:0007669"/>
    <property type="project" value="UniProtKB-KW"/>
</dbReference>
<dbReference type="GO" id="GO:0016887">
    <property type="term" value="F:ATP hydrolysis activity"/>
    <property type="evidence" value="ECO:0007669"/>
    <property type="project" value="InterPro"/>
</dbReference>
<dbReference type="GO" id="GO:0005179">
    <property type="term" value="F:hormone activity"/>
    <property type="evidence" value="ECO:0007669"/>
    <property type="project" value="UniProtKB-KW"/>
</dbReference>
<dbReference type="FunFam" id="3.40.50.300:FF:001014">
    <property type="entry name" value="Torsin"/>
    <property type="match status" value="1"/>
</dbReference>
<dbReference type="Gene3D" id="3.40.50.300">
    <property type="entry name" value="P-loop containing nucleotide triphosphate hydrolases"/>
    <property type="match status" value="1"/>
</dbReference>
<dbReference type="InterPro" id="IPR027417">
    <property type="entry name" value="P-loop_NTPase"/>
</dbReference>
<dbReference type="InterPro" id="IPR010448">
    <property type="entry name" value="Torsin"/>
</dbReference>
<dbReference type="PANTHER" id="PTHR10760">
    <property type="entry name" value="TORSIN"/>
    <property type="match status" value="1"/>
</dbReference>
<dbReference type="PANTHER" id="PTHR10760:SF4">
    <property type="entry name" value="TORSIN-2A"/>
    <property type="match status" value="1"/>
</dbReference>
<dbReference type="Pfam" id="PF06309">
    <property type="entry name" value="Torsin"/>
    <property type="match status" value="1"/>
</dbReference>
<dbReference type="SUPFAM" id="SSF52540">
    <property type="entry name" value="P-loop containing nucleoside triphosphate hydrolases"/>
    <property type="match status" value="1"/>
</dbReference>
<proteinExistence type="evidence at protein level"/>
<accession>Q8N2E6</accession>
<sequence>MAAATRGCRPWGSLLGLLGLVSAAAAAWDLASLRCTLGAFCECDFRPDLPGLECDLAQHLAGQHLAKALVVKALKAFVRDPAPTKPLVLSLHGWTGTGKSYVSSLLAHYLFQGGLRSPRVHHFSPVLHFPHPSHIERYKKDLKSWVQGNLTACGRSLFLFDEMDKMPPGLMEVLRPFLGSSWVVYGTNYRKAIFIFIRWLLKLGHHGRAPPRRSGALPPAPAAPRPALRAQRAGPAGPGAKG</sequence>
<organism>
    <name type="scientific">Homo sapiens</name>
    <name type="common">Human</name>
    <dbReference type="NCBI Taxonomy" id="9606"/>
    <lineage>
        <taxon>Eukaryota</taxon>
        <taxon>Metazoa</taxon>
        <taxon>Chordata</taxon>
        <taxon>Craniata</taxon>
        <taxon>Vertebrata</taxon>
        <taxon>Euteleostomi</taxon>
        <taxon>Mammalia</taxon>
        <taxon>Eutheria</taxon>
        <taxon>Euarchontoglires</taxon>
        <taxon>Primates</taxon>
        <taxon>Haplorrhini</taxon>
        <taxon>Catarrhini</taxon>
        <taxon>Hominidae</taxon>
        <taxon>Homo</taxon>
    </lineage>
</organism>
<reference key="1">
    <citation type="journal article" date="2005" name="DNA Res.">
        <title>Signal sequence and keyword trap in silico for selection of full-length human cDNAs encoding secretion or membrane proteins from oligo-capped cDNA libraries.</title>
        <authorList>
            <person name="Otsuki T."/>
            <person name="Ota T."/>
            <person name="Nishikawa T."/>
            <person name="Hayashi K."/>
            <person name="Suzuki Y."/>
            <person name="Yamamoto J."/>
            <person name="Wakamatsu A."/>
            <person name="Kimura K."/>
            <person name="Sakamoto K."/>
            <person name="Hatano N."/>
            <person name="Kawai Y."/>
            <person name="Ishii S."/>
            <person name="Saito K."/>
            <person name="Kojima S."/>
            <person name="Sugiyama T."/>
            <person name="Ono T."/>
            <person name="Okano K."/>
            <person name="Yoshikawa Y."/>
            <person name="Aotsuka S."/>
            <person name="Sasaki N."/>
            <person name="Hattori A."/>
            <person name="Okumura K."/>
            <person name="Nagai K."/>
            <person name="Sugano S."/>
            <person name="Isogai T."/>
        </authorList>
    </citation>
    <scope>NUCLEOTIDE SEQUENCE [LARGE SCALE MRNA] (ISOFORM 4)</scope>
    <source>
        <tissue>Embryo</tissue>
    </source>
</reference>
<reference key="2">
    <citation type="journal article" date="2004" name="Nature">
        <title>DNA sequence and analysis of human chromosome 9.</title>
        <authorList>
            <person name="Humphray S.J."/>
            <person name="Oliver K."/>
            <person name="Hunt A.R."/>
            <person name="Plumb R.W."/>
            <person name="Loveland J.E."/>
            <person name="Howe K.L."/>
            <person name="Andrews T.D."/>
            <person name="Searle S."/>
            <person name="Hunt S.E."/>
            <person name="Scott C.E."/>
            <person name="Jones M.C."/>
            <person name="Ainscough R."/>
            <person name="Almeida J.P."/>
            <person name="Ambrose K.D."/>
            <person name="Ashwell R.I.S."/>
            <person name="Babbage A.K."/>
            <person name="Babbage S."/>
            <person name="Bagguley C.L."/>
            <person name="Bailey J."/>
            <person name="Banerjee R."/>
            <person name="Barker D.J."/>
            <person name="Barlow K.F."/>
            <person name="Bates K."/>
            <person name="Beasley H."/>
            <person name="Beasley O."/>
            <person name="Bird C.P."/>
            <person name="Bray-Allen S."/>
            <person name="Brown A.J."/>
            <person name="Brown J.Y."/>
            <person name="Burford D."/>
            <person name="Burrill W."/>
            <person name="Burton J."/>
            <person name="Carder C."/>
            <person name="Carter N.P."/>
            <person name="Chapman J.C."/>
            <person name="Chen Y."/>
            <person name="Clarke G."/>
            <person name="Clark S.Y."/>
            <person name="Clee C.M."/>
            <person name="Clegg S."/>
            <person name="Collier R.E."/>
            <person name="Corby N."/>
            <person name="Crosier M."/>
            <person name="Cummings A.T."/>
            <person name="Davies J."/>
            <person name="Dhami P."/>
            <person name="Dunn M."/>
            <person name="Dutta I."/>
            <person name="Dyer L.W."/>
            <person name="Earthrowl M.E."/>
            <person name="Faulkner L."/>
            <person name="Fleming C.J."/>
            <person name="Frankish A."/>
            <person name="Frankland J.A."/>
            <person name="French L."/>
            <person name="Fricker D.G."/>
            <person name="Garner P."/>
            <person name="Garnett J."/>
            <person name="Ghori J."/>
            <person name="Gilbert J.G.R."/>
            <person name="Glison C."/>
            <person name="Grafham D.V."/>
            <person name="Gribble S."/>
            <person name="Griffiths C."/>
            <person name="Griffiths-Jones S."/>
            <person name="Grocock R."/>
            <person name="Guy J."/>
            <person name="Hall R.E."/>
            <person name="Hammond S."/>
            <person name="Harley J.L."/>
            <person name="Harrison E.S.I."/>
            <person name="Hart E.A."/>
            <person name="Heath P.D."/>
            <person name="Henderson C.D."/>
            <person name="Hopkins B.L."/>
            <person name="Howard P.J."/>
            <person name="Howden P.J."/>
            <person name="Huckle E."/>
            <person name="Johnson C."/>
            <person name="Johnson D."/>
            <person name="Joy A.A."/>
            <person name="Kay M."/>
            <person name="Keenan S."/>
            <person name="Kershaw J.K."/>
            <person name="Kimberley A.M."/>
            <person name="King A."/>
            <person name="Knights A."/>
            <person name="Laird G.K."/>
            <person name="Langford C."/>
            <person name="Lawlor S."/>
            <person name="Leongamornlert D.A."/>
            <person name="Leversha M."/>
            <person name="Lloyd C."/>
            <person name="Lloyd D.M."/>
            <person name="Lovell J."/>
            <person name="Martin S."/>
            <person name="Mashreghi-Mohammadi M."/>
            <person name="Matthews L."/>
            <person name="McLaren S."/>
            <person name="McLay K.E."/>
            <person name="McMurray A."/>
            <person name="Milne S."/>
            <person name="Nickerson T."/>
            <person name="Nisbett J."/>
            <person name="Nordsiek G."/>
            <person name="Pearce A.V."/>
            <person name="Peck A.I."/>
            <person name="Porter K.M."/>
            <person name="Pandian R."/>
            <person name="Pelan S."/>
            <person name="Phillimore B."/>
            <person name="Povey S."/>
            <person name="Ramsey Y."/>
            <person name="Rand V."/>
            <person name="Scharfe M."/>
            <person name="Sehra H.K."/>
            <person name="Shownkeen R."/>
            <person name="Sims S.K."/>
            <person name="Skuce C.D."/>
            <person name="Smith M."/>
            <person name="Steward C.A."/>
            <person name="Swarbreck D."/>
            <person name="Sycamore N."/>
            <person name="Tester J."/>
            <person name="Thorpe A."/>
            <person name="Tracey A."/>
            <person name="Tromans A."/>
            <person name="Thomas D.W."/>
            <person name="Wall M."/>
            <person name="Wallis J.M."/>
            <person name="West A.P."/>
            <person name="Whitehead S.L."/>
            <person name="Willey D.L."/>
            <person name="Williams S.A."/>
            <person name="Wilming L."/>
            <person name="Wray P.W."/>
            <person name="Young L."/>
            <person name="Ashurst J.L."/>
            <person name="Coulson A."/>
            <person name="Blocker H."/>
            <person name="Durbin R.M."/>
            <person name="Sulston J.E."/>
            <person name="Hubbard T."/>
            <person name="Jackson M.J."/>
            <person name="Bentley D.R."/>
            <person name="Beck S."/>
            <person name="Rogers J."/>
            <person name="Dunham I."/>
        </authorList>
    </citation>
    <scope>NUCLEOTIDE SEQUENCE [LARGE SCALE GENOMIC DNA]</scope>
</reference>
<reference key="3">
    <citation type="journal article" date="2003" name="Nat. Med.">
        <title>Salusins: newly identified bioactive peptides with hemodynamic and mitogenic activities.</title>
        <authorList>
            <person name="Shichiri M."/>
            <person name="Ishimaru S."/>
            <person name="Ota T."/>
            <person name="Nishikawa T."/>
            <person name="Isogai T."/>
            <person name="Hirata Y."/>
        </authorList>
    </citation>
    <scope>FUNCTION OF SALUSINS</scope>
    <scope>TISSUE SPECIFICITY</scope>
    <scope>AMIDATION AT LYS-241</scope>
    <scope>SUBCELLULAR LOCATION</scope>
</reference>
<name>TOR2X_HUMAN</name>